<proteinExistence type="inferred from homology"/>
<organism>
    <name type="scientific">Chlorobium chlorochromatii (strain CaD3)</name>
    <dbReference type="NCBI Taxonomy" id="340177"/>
    <lineage>
        <taxon>Bacteria</taxon>
        <taxon>Pseudomonadati</taxon>
        <taxon>Chlorobiota</taxon>
        <taxon>Chlorobiia</taxon>
        <taxon>Chlorobiales</taxon>
        <taxon>Chlorobiaceae</taxon>
        <taxon>Chlorobium/Pelodictyon group</taxon>
        <taxon>Chlorobium</taxon>
    </lineage>
</organism>
<keyword id="KW-0963">Cytoplasm</keyword>
<keyword id="KW-0488">Methylation</keyword>
<keyword id="KW-0648">Protein biosynthesis</keyword>
<comment type="function">
    <text evidence="1">Peptide chain release factor 1 directs the termination of translation in response to the peptide chain termination codons UAG and UAA.</text>
</comment>
<comment type="subcellular location">
    <subcellularLocation>
        <location evidence="1">Cytoplasm</location>
    </subcellularLocation>
</comment>
<comment type="PTM">
    <text evidence="1">Methylated by PrmC. Methylation increases the termination efficiency of RF1.</text>
</comment>
<comment type="similarity">
    <text evidence="1">Belongs to the prokaryotic/mitochondrial release factor family.</text>
</comment>
<name>RF1_CHLCH</name>
<dbReference type="EMBL" id="CP000108">
    <property type="protein sequence ID" value="ABB27289.1"/>
    <property type="molecule type" value="Genomic_DNA"/>
</dbReference>
<dbReference type="SMR" id="Q3AUE2"/>
<dbReference type="STRING" id="340177.Cag_0010"/>
<dbReference type="KEGG" id="cch:Cag_0010"/>
<dbReference type="eggNOG" id="COG0216">
    <property type="taxonomic scope" value="Bacteria"/>
</dbReference>
<dbReference type="HOGENOM" id="CLU_036856_0_1_10"/>
<dbReference type="OrthoDB" id="9806673at2"/>
<dbReference type="GO" id="GO:0005737">
    <property type="term" value="C:cytoplasm"/>
    <property type="evidence" value="ECO:0007669"/>
    <property type="project" value="UniProtKB-SubCell"/>
</dbReference>
<dbReference type="GO" id="GO:0016149">
    <property type="term" value="F:translation release factor activity, codon specific"/>
    <property type="evidence" value="ECO:0007669"/>
    <property type="project" value="UniProtKB-UniRule"/>
</dbReference>
<dbReference type="FunFam" id="3.30.160.20:FF:000004">
    <property type="entry name" value="Peptide chain release factor 1"/>
    <property type="match status" value="1"/>
</dbReference>
<dbReference type="FunFam" id="3.30.70.1660:FF:000002">
    <property type="entry name" value="Peptide chain release factor 1"/>
    <property type="match status" value="1"/>
</dbReference>
<dbReference type="Gene3D" id="3.30.160.20">
    <property type="match status" value="1"/>
</dbReference>
<dbReference type="Gene3D" id="3.30.70.1660">
    <property type="match status" value="1"/>
</dbReference>
<dbReference type="Gene3D" id="6.10.140.1950">
    <property type="match status" value="1"/>
</dbReference>
<dbReference type="HAMAP" id="MF_00093">
    <property type="entry name" value="Rel_fac_1"/>
    <property type="match status" value="1"/>
</dbReference>
<dbReference type="InterPro" id="IPR005139">
    <property type="entry name" value="PCRF"/>
</dbReference>
<dbReference type="InterPro" id="IPR000352">
    <property type="entry name" value="Pep_chain_release_fac_I"/>
</dbReference>
<dbReference type="InterPro" id="IPR045853">
    <property type="entry name" value="Pep_chain_release_fac_I_sf"/>
</dbReference>
<dbReference type="InterPro" id="IPR050057">
    <property type="entry name" value="Prokaryotic/Mito_RF"/>
</dbReference>
<dbReference type="InterPro" id="IPR004373">
    <property type="entry name" value="RF-1"/>
</dbReference>
<dbReference type="NCBIfam" id="TIGR00019">
    <property type="entry name" value="prfA"/>
    <property type="match status" value="1"/>
</dbReference>
<dbReference type="NCBIfam" id="NF001859">
    <property type="entry name" value="PRK00591.1"/>
    <property type="match status" value="1"/>
</dbReference>
<dbReference type="PANTHER" id="PTHR43804">
    <property type="entry name" value="LD18447P"/>
    <property type="match status" value="1"/>
</dbReference>
<dbReference type="PANTHER" id="PTHR43804:SF7">
    <property type="entry name" value="LD18447P"/>
    <property type="match status" value="1"/>
</dbReference>
<dbReference type="Pfam" id="PF03462">
    <property type="entry name" value="PCRF"/>
    <property type="match status" value="1"/>
</dbReference>
<dbReference type="Pfam" id="PF00472">
    <property type="entry name" value="RF-1"/>
    <property type="match status" value="1"/>
</dbReference>
<dbReference type="SMART" id="SM00937">
    <property type="entry name" value="PCRF"/>
    <property type="match status" value="1"/>
</dbReference>
<dbReference type="SUPFAM" id="SSF75620">
    <property type="entry name" value="Release factor"/>
    <property type="match status" value="1"/>
</dbReference>
<dbReference type="PROSITE" id="PS00745">
    <property type="entry name" value="RF_PROK_I"/>
    <property type="match status" value="1"/>
</dbReference>
<accession>Q3AUE2</accession>
<feature type="chain" id="PRO_0000263253" description="Peptide chain release factor 1">
    <location>
        <begin position="1"/>
        <end position="357"/>
    </location>
</feature>
<feature type="modified residue" description="N5-methylglutamine" evidence="1">
    <location>
        <position position="234"/>
    </location>
</feature>
<protein>
    <recommendedName>
        <fullName evidence="1">Peptide chain release factor 1</fullName>
        <shortName evidence="1">RF-1</shortName>
    </recommendedName>
</protein>
<sequence>MLDKLQAIKEKHLDLEQALSDPSLANDQERFRKLNREYSNLREVVQAFDAYQRKATELEAAQHLLATESDTEMKALAEAEVDELQETVAELEQGLKILLLPKEEADSRNVIIEIRAGTGGDEASLFAADLTRMYQRYAEQKGWQYKVLDYNESSVPGGFKEMILEISGNNVFGTMKYESGVHRVQRVPDTEAQGRIHTSAVSVAVLPEAEEVDVEIRRDDLRFDTYRSGGKGGQNVNKVETAVRITHMPTGIVAACQEERSQLQNKERAMQMLRTKLYDIQLAEQQQQRADLRRTMVATGDRSAKIRTYNYPQSRVTDHRIGFTSHALPQIMQGELHEVIEALIMHDQAERLKSELQ</sequence>
<reference key="1">
    <citation type="submission" date="2005-08" db="EMBL/GenBank/DDBJ databases">
        <title>Complete sequence of Chlorobium chlorochromatii CaD3.</title>
        <authorList>
            <consortium name="US DOE Joint Genome Institute"/>
            <person name="Copeland A."/>
            <person name="Lucas S."/>
            <person name="Lapidus A."/>
            <person name="Barry K."/>
            <person name="Detter J.C."/>
            <person name="Glavina T."/>
            <person name="Hammon N."/>
            <person name="Israni S."/>
            <person name="Pitluck S."/>
            <person name="Bryant D."/>
            <person name="Schmutz J."/>
            <person name="Larimer F."/>
            <person name="Land M."/>
            <person name="Kyrpides N."/>
            <person name="Ivanova N."/>
            <person name="Richardson P."/>
        </authorList>
    </citation>
    <scope>NUCLEOTIDE SEQUENCE [LARGE SCALE GENOMIC DNA]</scope>
    <source>
        <strain>CaD3</strain>
    </source>
</reference>
<evidence type="ECO:0000255" key="1">
    <source>
        <dbReference type="HAMAP-Rule" id="MF_00093"/>
    </source>
</evidence>
<gene>
    <name evidence="1" type="primary">prfA</name>
    <name type="ordered locus">Cag_0010</name>
</gene>